<proteinExistence type="inferred from homology"/>
<dbReference type="EC" id="2.4.1.227" evidence="1"/>
<dbReference type="EMBL" id="AM181176">
    <property type="protein sequence ID" value="CAY47213.1"/>
    <property type="molecule type" value="Genomic_DNA"/>
</dbReference>
<dbReference type="RefSeq" id="WP_012722296.1">
    <property type="nucleotide sequence ID" value="NC_012660.1"/>
</dbReference>
<dbReference type="SMR" id="C3KCT0"/>
<dbReference type="STRING" id="294.SRM1_04721"/>
<dbReference type="CAZy" id="GT28">
    <property type="family name" value="Glycosyltransferase Family 28"/>
</dbReference>
<dbReference type="PATRIC" id="fig|216595.4.peg.1183"/>
<dbReference type="eggNOG" id="COG0707">
    <property type="taxonomic scope" value="Bacteria"/>
</dbReference>
<dbReference type="HOGENOM" id="CLU_037404_2_0_6"/>
<dbReference type="OrthoDB" id="9808936at2"/>
<dbReference type="UniPathway" id="UPA00219"/>
<dbReference type="GO" id="GO:0005886">
    <property type="term" value="C:plasma membrane"/>
    <property type="evidence" value="ECO:0007669"/>
    <property type="project" value="UniProtKB-SubCell"/>
</dbReference>
<dbReference type="GO" id="GO:0051991">
    <property type="term" value="F:UDP-N-acetyl-D-glucosamine:N-acetylmuramoyl-L-alanyl-D-glutamyl-meso-2,6-diaminopimelyl-D-alanyl-D-alanine-diphosphoundecaprenol 4-beta-N-acetylglucosaminlytransferase activity"/>
    <property type="evidence" value="ECO:0007669"/>
    <property type="project" value="RHEA"/>
</dbReference>
<dbReference type="GO" id="GO:0050511">
    <property type="term" value="F:undecaprenyldiphospho-muramoylpentapeptide beta-N-acetylglucosaminyltransferase activity"/>
    <property type="evidence" value="ECO:0007669"/>
    <property type="project" value="UniProtKB-UniRule"/>
</dbReference>
<dbReference type="GO" id="GO:0005975">
    <property type="term" value="P:carbohydrate metabolic process"/>
    <property type="evidence" value="ECO:0007669"/>
    <property type="project" value="InterPro"/>
</dbReference>
<dbReference type="GO" id="GO:0051301">
    <property type="term" value="P:cell division"/>
    <property type="evidence" value="ECO:0007669"/>
    <property type="project" value="UniProtKB-KW"/>
</dbReference>
<dbReference type="GO" id="GO:0071555">
    <property type="term" value="P:cell wall organization"/>
    <property type="evidence" value="ECO:0007669"/>
    <property type="project" value="UniProtKB-KW"/>
</dbReference>
<dbReference type="GO" id="GO:0030259">
    <property type="term" value="P:lipid glycosylation"/>
    <property type="evidence" value="ECO:0007669"/>
    <property type="project" value="UniProtKB-UniRule"/>
</dbReference>
<dbReference type="GO" id="GO:0009252">
    <property type="term" value="P:peptidoglycan biosynthetic process"/>
    <property type="evidence" value="ECO:0007669"/>
    <property type="project" value="UniProtKB-UniRule"/>
</dbReference>
<dbReference type="GO" id="GO:0008360">
    <property type="term" value="P:regulation of cell shape"/>
    <property type="evidence" value="ECO:0007669"/>
    <property type="project" value="UniProtKB-KW"/>
</dbReference>
<dbReference type="CDD" id="cd03785">
    <property type="entry name" value="GT28_MurG"/>
    <property type="match status" value="1"/>
</dbReference>
<dbReference type="Gene3D" id="3.40.50.2000">
    <property type="entry name" value="Glycogen Phosphorylase B"/>
    <property type="match status" value="2"/>
</dbReference>
<dbReference type="HAMAP" id="MF_00033">
    <property type="entry name" value="MurG"/>
    <property type="match status" value="1"/>
</dbReference>
<dbReference type="InterPro" id="IPR006009">
    <property type="entry name" value="GlcNAc_MurG"/>
</dbReference>
<dbReference type="InterPro" id="IPR007235">
    <property type="entry name" value="Glyco_trans_28_C"/>
</dbReference>
<dbReference type="InterPro" id="IPR004276">
    <property type="entry name" value="GlycoTrans_28_N"/>
</dbReference>
<dbReference type="NCBIfam" id="TIGR01133">
    <property type="entry name" value="murG"/>
    <property type="match status" value="1"/>
</dbReference>
<dbReference type="PANTHER" id="PTHR21015:SF22">
    <property type="entry name" value="GLYCOSYLTRANSFERASE"/>
    <property type="match status" value="1"/>
</dbReference>
<dbReference type="PANTHER" id="PTHR21015">
    <property type="entry name" value="UDP-N-ACETYLGLUCOSAMINE--N-ACETYLMURAMYL-(PENTAPEPTIDE) PYROPHOSPHORYL-UNDECAPRENOL N-ACETYLGLUCOSAMINE TRANSFERASE 1"/>
    <property type="match status" value="1"/>
</dbReference>
<dbReference type="Pfam" id="PF04101">
    <property type="entry name" value="Glyco_tran_28_C"/>
    <property type="match status" value="1"/>
</dbReference>
<dbReference type="Pfam" id="PF03033">
    <property type="entry name" value="Glyco_transf_28"/>
    <property type="match status" value="1"/>
</dbReference>
<dbReference type="SUPFAM" id="SSF53756">
    <property type="entry name" value="UDP-Glycosyltransferase/glycogen phosphorylase"/>
    <property type="match status" value="1"/>
</dbReference>
<feature type="chain" id="PRO_1000202026" description="UDP-N-acetylglucosamine--N-acetylmuramyl-(pentapeptide) pyrophosphoryl-undecaprenol N-acetylglucosamine transferase">
    <location>
        <begin position="1"/>
        <end position="356"/>
    </location>
</feature>
<feature type="binding site" evidence="1">
    <location>
        <begin position="12"/>
        <end position="14"/>
    </location>
    <ligand>
        <name>UDP-N-acetyl-alpha-D-glucosamine</name>
        <dbReference type="ChEBI" id="CHEBI:57705"/>
    </ligand>
</feature>
<feature type="binding site" evidence="1">
    <location>
        <position position="124"/>
    </location>
    <ligand>
        <name>UDP-N-acetyl-alpha-D-glucosamine</name>
        <dbReference type="ChEBI" id="CHEBI:57705"/>
    </ligand>
</feature>
<feature type="binding site" evidence="1">
    <location>
        <position position="163"/>
    </location>
    <ligand>
        <name>UDP-N-acetyl-alpha-D-glucosamine</name>
        <dbReference type="ChEBI" id="CHEBI:57705"/>
    </ligand>
</feature>
<feature type="binding site" evidence="1">
    <location>
        <position position="188"/>
    </location>
    <ligand>
        <name>UDP-N-acetyl-alpha-D-glucosamine</name>
        <dbReference type="ChEBI" id="CHEBI:57705"/>
    </ligand>
</feature>
<feature type="binding site" evidence="1">
    <location>
        <position position="242"/>
    </location>
    <ligand>
        <name>UDP-N-acetyl-alpha-D-glucosamine</name>
        <dbReference type="ChEBI" id="CHEBI:57705"/>
    </ligand>
</feature>
<feature type="binding site" evidence="1">
    <location>
        <begin position="261"/>
        <end position="266"/>
    </location>
    <ligand>
        <name>UDP-N-acetyl-alpha-D-glucosamine</name>
        <dbReference type="ChEBI" id="CHEBI:57705"/>
    </ligand>
</feature>
<feature type="binding site" evidence="1">
    <location>
        <position position="287"/>
    </location>
    <ligand>
        <name>UDP-N-acetyl-alpha-D-glucosamine</name>
        <dbReference type="ChEBI" id="CHEBI:57705"/>
    </ligand>
</feature>
<sequence>MGANVLIMAGGTGGHVFPALACAREFQNRGYTVHWLGTPRGIENELVPNAGLPLHLINVTGLRGKGKLSLLKAPFVLLKAVWQARKVIRDVQPVCVLGFGGYVTGPGGVAAKLAGVPVIVHEQNAVAGTANRLLVPLAARVCEAFPNTFSASDKRRTTGNPVRTELFMDIARQALAGRKAHLLILGGSLGAEPLNKLLPEAVAQLPAELRPEIFHQAGKNHDEVTATRYREAGVEANVQPFIKDMAHAYGWADLVVCRAGALTVSELAAAGLPSLLVPLPHAIDDHQTRNAEYLAGEGAAFLLPQRTTGAADLAARLTEVLMQPERLNSMASTASRLAKPDATRTVVDICLEVAHG</sequence>
<name>MURG_PSEFS</name>
<keyword id="KW-0131">Cell cycle</keyword>
<keyword id="KW-0132">Cell division</keyword>
<keyword id="KW-0997">Cell inner membrane</keyword>
<keyword id="KW-1003">Cell membrane</keyword>
<keyword id="KW-0133">Cell shape</keyword>
<keyword id="KW-0961">Cell wall biogenesis/degradation</keyword>
<keyword id="KW-0328">Glycosyltransferase</keyword>
<keyword id="KW-0472">Membrane</keyword>
<keyword id="KW-0573">Peptidoglycan synthesis</keyword>
<keyword id="KW-0808">Transferase</keyword>
<accession>C3KCT0</accession>
<organism>
    <name type="scientific">Pseudomonas fluorescens (strain SBW25)</name>
    <dbReference type="NCBI Taxonomy" id="216595"/>
    <lineage>
        <taxon>Bacteria</taxon>
        <taxon>Pseudomonadati</taxon>
        <taxon>Pseudomonadota</taxon>
        <taxon>Gammaproteobacteria</taxon>
        <taxon>Pseudomonadales</taxon>
        <taxon>Pseudomonadaceae</taxon>
        <taxon>Pseudomonas</taxon>
    </lineage>
</organism>
<protein>
    <recommendedName>
        <fullName evidence="1">UDP-N-acetylglucosamine--N-acetylmuramyl-(pentapeptide) pyrophosphoryl-undecaprenol N-acetylglucosamine transferase</fullName>
        <ecNumber evidence="1">2.4.1.227</ecNumber>
    </recommendedName>
    <alternativeName>
        <fullName evidence="1">Undecaprenyl-PP-MurNAc-pentapeptide-UDPGlcNAc GlcNAc transferase</fullName>
    </alternativeName>
</protein>
<reference key="1">
    <citation type="journal article" date="2009" name="Genome Biol.">
        <title>Genomic and genetic analyses of diversity and plant interactions of Pseudomonas fluorescens.</title>
        <authorList>
            <person name="Silby M.W."/>
            <person name="Cerdeno-Tarraga A.M."/>
            <person name="Vernikos G.S."/>
            <person name="Giddens S.R."/>
            <person name="Jackson R.W."/>
            <person name="Preston G.M."/>
            <person name="Zhang X.-X."/>
            <person name="Moon C.D."/>
            <person name="Gehrig S.M."/>
            <person name="Godfrey S.A.C."/>
            <person name="Knight C.G."/>
            <person name="Malone J.G."/>
            <person name="Robinson Z."/>
            <person name="Spiers A.J."/>
            <person name="Harris S."/>
            <person name="Challis G.L."/>
            <person name="Yaxley A.M."/>
            <person name="Harris D."/>
            <person name="Seeger K."/>
            <person name="Murphy L."/>
            <person name="Rutter S."/>
            <person name="Squares R."/>
            <person name="Quail M.A."/>
            <person name="Saunders E."/>
            <person name="Mavromatis K."/>
            <person name="Brettin T.S."/>
            <person name="Bentley S.D."/>
            <person name="Hothersall J."/>
            <person name="Stephens E."/>
            <person name="Thomas C.M."/>
            <person name="Parkhill J."/>
            <person name="Levy S.B."/>
            <person name="Rainey P.B."/>
            <person name="Thomson N.R."/>
        </authorList>
    </citation>
    <scope>NUCLEOTIDE SEQUENCE [LARGE SCALE GENOMIC DNA]</scope>
    <source>
        <strain>SBW25</strain>
    </source>
</reference>
<gene>
    <name evidence="1" type="primary">murG</name>
    <name type="ordered locus">PFLU_0947</name>
</gene>
<comment type="function">
    <text evidence="1">Cell wall formation. Catalyzes the transfer of a GlcNAc subunit on undecaprenyl-pyrophosphoryl-MurNAc-pentapeptide (lipid intermediate I) to form undecaprenyl-pyrophosphoryl-MurNAc-(pentapeptide)GlcNAc (lipid intermediate II).</text>
</comment>
<comment type="catalytic activity">
    <reaction evidence="1">
        <text>di-trans,octa-cis-undecaprenyl diphospho-N-acetyl-alpha-D-muramoyl-L-alanyl-D-glutamyl-meso-2,6-diaminopimeloyl-D-alanyl-D-alanine + UDP-N-acetyl-alpha-D-glucosamine = di-trans,octa-cis-undecaprenyl diphospho-[N-acetyl-alpha-D-glucosaminyl-(1-&gt;4)]-N-acetyl-alpha-D-muramoyl-L-alanyl-D-glutamyl-meso-2,6-diaminopimeloyl-D-alanyl-D-alanine + UDP + H(+)</text>
        <dbReference type="Rhea" id="RHEA:31227"/>
        <dbReference type="ChEBI" id="CHEBI:15378"/>
        <dbReference type="ChEBI" id="CHEBI:57705"/>
        <dbReference type="ChEBI" id="CHEBI:58223"/>
        <dbReference type="ChEBI" id="CHEBI:61387"/>
        <dbReference type="ChEBI" id="CHEBI:61388"/>
        <dbReference type="EC" id="2.4.1.227"/>
    </reaction>
</comment>
<comment type="pathway">
    <text evidence="1">Cell wall biogenesis; peptidoglycan biosynthesis.</text>
</comment>
<comment type="subcellular location">
    <subcellularLocation>
        <location evidence="1">Cell inner membrane</location>
        <topology evidence="1">Peripheral membrane protein</topology>
        <orientation evidence="1">Cytoplasmic side</orientation>
    </subcellularLocation>
</comment>
<comment type="similarity">
    <text evidence="1">Belongs to the glycosyltransferase 28 family. MurG subfamily.</text>
</comment>
<evidence type="ECO:0000255" key="1">
    <source>
        <dbReference type="HAMAP-Rule" id="MF_00033"/>
    </source>
</evidence>